<gene>
    <name evidence="2" type="primary">trmB</name>
    <name type="ordered locus">LAR_1194</name>
</gene>
<feature type="chain" id="PRO_1000136353" description="tRNA (guanine-N(7)-)-methyltransferase">
    <location>
        <begin position="1"/>
        <end position="213"/>
    </location>
</feature>
<feature type="active site" evidence="1">
    <location>
        <position position="118"/>
    </location>
</feature>
<feature type="binding site" evidence="2">
    <location>
        <position position="44"/>
    </location>
    <ligand>
        <name>S-adenosyl-L-methionine</name>
        <dbReference type="ChEBI" id="CHEBI:59789"/>
    </ligand>
</feature>
<feature type="binding site" evidence="2">
    <location>
        <position position="69"/>
    </location>
    <ligand>
        <name>S-adenosyl-L-methionine</name>
        <dbReference type="ChEBI" id="CHEBI:59789"/>
    </ligand>
</feature>
<feature type="binding site" evidence="2">
    <location>
        <position position="96"/>
    </location>
    <ligand>
        <name>S-adenosyl-L-methionine</name>
        <dbReference type="ChEBI" id="CHEBI:59789"/>
    </ligand>
</feature>
<feature type="binding site" evidence="2">
    <location>
        <position position="118"/>
    </location>
    <ligand>
        <name>S-adenosyl-L-methionine</name>
        <dbReference type="ChEBI" id="CHEBI:59789"/>
    </ligand>
</feature>
<feature type="binding site" evidence="2">
    <location>
        <position position="122"/>
    </location>
    <ligand>
        <name>substrate</name>
    </ligand>
</feature>
<feature type="binding site" evidence="2">
    <location>
        <position position="154"/>
    </location>
    <ligand>
        <name>substrate</name>
    </ligand>
</feature>
<feature type="binding site" evidence="2">
    <location>
        <begin position="192"/>
        <end position="195"/>
    </location>
    <ligand>
        <name>substrate</name>
    </ligand>
</feature>
<sequence length="213" mass="24675">MRVKHKKWADPLIAAHPELMIDDATQFKGKWQSRFAKEQPLHLEVGMGKGQFIIGMAKDHPEINFIGLEIQRTVAAIALKKALEEDLPNLQLICGDGEDLQEYFEDGEVAKMYLNFSDPWPKKRHAKRRLTYKTFLATYQQILQDQGAIELKTDNMGLFEFSLESMNNYGMIFDGVWLDLHHSEENEHNVETEYEQKFAAKGQPIYKLIANFK</sequence>
<proteinExistence type="inferred from homology"/>
<dbReference type="EC" id="2.1.1.33" evidence="2"/>
<dbReference type="EMBL" id="AP007281">
    <property type="protein sequence ID" value="BAG25710.1"/>
    <property type="molecule type" value="Genomic_DNA"/>
</dbReference>
<dbReference type="RefSeq" id="WP_003668507.1">
    <property type="nucleotide sequence ID" value="NC_010609.1"/>
</dbReference>
<dbReference type="SMR" id="B2G8C8"/>
<dbReference type="KEGG" id="lrf:LAR_1194"/>
<dbReference type="HOGENOM" id="CLU_050910_2_1_9"/>
<dbReference type="UniPathway" id="UPA00989"/>
<dbReference type="GO" id="GO:0043527">
    <property type="term" value="C:tRNA methyltransferase complex"/>
    <property type="evidence" value="ECO:0007669"/>
    <property type="project" value="TreeGrafter"/>
</dbReference>
<dbReference type="GO" id="GO:0008176">
    <property type="term" value="F:tRNA (guanine(46)-N7)-methyltransferase activity"/>
    <property type="evidence" value="ECO:0007669"/>
    <property type="project" value="UniProtKB-UniRule"/>
</dbReference>
<dbReference type="CDD" id="cd02440">
    <property type="entry name" value="AdoMet_MTases"/>
    <property type="match status" value="1"/>
</dbReference>
<dbReference type="FunFam" id="3.40.50.150:FF:000035">
    <property type="entry name" value="tRNA (guanine-N(7)-)-methyltransferase"/>
    <property type="match status" value="1"/>
</dbReference>
<dbReference type="Gene3D" id="3.40.50.150">
    <property type="entry name" value="Vaccinia Virus protein VP39"/>
    <property type="match status" value="1"/>
</dbReference>
<dbReference type="HAMAP" id="MF_01057">
    <property type="entry name" value="tRNA_methyltr_TrmB"/>
    <property type="match status" value="1"/>
</dbReference>
<dbReference type="InterPro" id="IPR029063">
    <property type="entry name" value="SAM-dependent_MTases_sf"/>
</dbReference>
<dbReference type="InterPro" id="IPR003358">
    <property type="entry name" value="tRNA_(Gua-N-7)_MeTrfase_Trmb"/>
</dbReference>
<dbReference type="InterPro" id="IPR055361">
    <property type="entry name" value="tRNA_methyltr_TrmB_bact"/>
</dbReference>
<dbReference type="NCBIfam" id="NF001080">
    <property type="entry name" value="PRK00121.2-2"/>
    <property type="match status" value="1"/>
</dbReference>
<dbReference type="NCBIfam" id="TIGR00091">
    <property type="entry name" value="tRNA (guanosine(46)-N7)-methyltransferase TrmB"/>
    <property type="match status" value="1"/>
</dbReference>
<dbReference type="PANTHER" id="PTHR23417">
    <property type="entry name" value="3-DEOXY-D-MANNO-OCTULOSONIC-ACID TRANSFERASE/TRNA GUANINE-N 7 - -METHYLTRANSFERASE"/>
    <property type="match status" value="1"/>
</dbReference>
<dbReference type="PANTHER" id="PTHR23417:SF14">
    <property type="entry name" value="PENTACOTRIPEPTIDE-REPEAT REGION OF PRORP DOMAIN-CONTAINING PROTEIN"/>
    <property type="match status" value="1"/>
</dbReference>
<dbReference type="Pfam" id="PF02390">
    <property type="entry name" value="Methyltransf_4"/>
    <property type="match status" value="1"/>
</dbReference>
<dbReference type="SUPFAM" id="SSF53335">
    <property type="entry name" value="S-adenosyl-L-methionine-dependent methyltransferases"/>
    <property type="match status" value="1"/>
</dbReference>
<dbReference type="PROSITE" id="PS51625">
    <property type="entry name" value="SAM_MT_TRMB"/>
    <property type="match status" value="1"/>
</dbReference>
<reference key="1">
    <citation type="journal article" date="2008" name="DNA Res.">
        <title>Comparative genome analysis of Lactobacillus reuteri and Lactobacillus fermentum reveal a genomic island for reuterin and cobalamin production.</title>
        <authorList>
            <person name="Morita H."/>
            <person name="Toh H."/>
            <person name="Fukuda S."/>
            <person name="Horikawa H."/>
            <person name="Oshima K."/>
            <person name="Suzuki T."/>
            <person name="Murakami M."/>
            <person name="Hisamatsu S."/>
            <person name="Kato Y."/>
            <person name="Takizawa T."/>
            <person name="Fukuoka H."/>
            <person name="Yoshimura T."/>
            <person name="Itoh K."/>
            <person name="O'Sullivan D.J."/>
            <person name="McKay L.L."/>
            <person name="Ohno H."/>
            <person name="Kikuchi J."/>
            <person name="Masaoka T."/>
            <person name="Hattori M."/>
        </authorList>
    </citation>
    <scope>NUCLEOTIDE SEQUENCE [LARGE SCALE GENOMIC DNA]</scope>
    <source>
        <strain>JCM 1112</strain>
    </source>
</reference>
<name>TRMB_LIMRJ</name>
<comment type="function">
    <text evidence="2">Catalyzes the formation of N(7)-methylguanine at position 46 (m7G46) in tRNA.</text>
</comment>
<comment type="catalytic activity">
    <reaction evidence="2">
        <text>guanosine(46) in tRNA + S-adenosyl-L-methionine = N(7)-methylguanosine(46) in tRNA + S-adenosyl-L-homocysteine</text>
        <dbReference type="Rhea" id="RHEA:42708"/>
        <dbReference type="Rhea" id="RHEA-COMP:10188"/>
        <dbReference type="Rhea" id="RHEA-COMP:10189"/>
        <dbReference type="ChEBI" id="CHEBI:57856"/>
        <dbReference type="ChEBI" id="CHEBI:59789"/>
        <dbReference type="ChEBI" id="CHEBI:74269"/>
        <dbReference type="ChEBI" id="CHEBI:74480"/>
        <dbReference type="EC" id="2.1.1.33"/>
    </reaction>
</comment>
<comment type="pathway">
    <text evidence="2">tRNA modification; N(7)-methylguanine-tRNA biosynthesis.</text>
</comment>
<comment type="similarity">
    <text evidence="2">Belongs to the class I-like SAM-binding methyltransferase superfamily. TrmB family.</text>
</comment>
<protein>
    <recommendedName>
        <fullName evidence="2">tRNA (guanine-N(7)-)-methyltransferase</fullName>
        <ecNumber evidence="2">2.1.1.33</ecNumber>
    </recommendedName>
    <alternativeName>
        <fullName evidence="2">tRNA (guanine(46)-N(7))-methyltransferase</fullName>
    </alternativeName>
    <alternativeName>
        <fullName evidence="2">tRNA(m7G46)-methyltransferase</fullName>
    </alternativeName>
</protein>
<accession>B2G8C8</accession>
<organism>
    <name type="scientific">Limosilactobacillus reuteri subsp. reuteri (strain JCM 1112)</name>
    <name type="common">Lactobacillus reuteri</name>
    <dbReference type="NCBI Taxonomy" id="557433"/>
    <lineage>
        <taxon>Bacteria</taxon>
        <taxon>Bacillati</taxon>
        <taxon>Bacillota</taxon>
        <taxon>Bacilli</taxon>
        <taxon>Lactobacillales</taxon>
        <taxon>Lactobacillaceae</taxon>
        <taxon>Limosilactobacillus</taxon>
    </lineage>
</organism>
<evidence type="ECO:0000250" key="1"/>
<evidence type="ECO:0000255" key="2">
    <source>
        <dbReference type="HAMAP-Rule" id="MF_01057"/>
    </source>
</evidence>
<keyword id="KW-0489">Methyltransferase</keyword>
<keyword id="KW-0949">S-adenosyl-L-methionine</keyword>
<keyword id="KW-0808">Transferase</keyword>
<keyword id="KW-0819">tRNA processing</keyword>